<comment type="function">
    <text evidence="1">Involved in the biosynthesis of the thiazole moiety of thiamine. Catalyzes the conversion of NAD and glycine to adenosine diphosphate 5-(2-hydroxyethyl)-4-methylthiazole-2-carboxylate (ADT), an adenylated thiazole intermediate, using free sulfide as a source of sulfur.</text>
</comment>
<comment type="catalytic activity">
    <reaction evidence="1">
        <text>hydrogen sulfide + glycine + NAD(+) = ADP-5-ethyl-4-methylthiazole-2-carboxylate + nicotinamide + 3 H2O + H(+)</text>
        <dbReference type="Rhea" id="RHEA:55704"/>
        <dbReference type="ChEBI" id="CHEBI:15377"/>
        <dbReference type="ChEBI" id="CHEBI:15378"/>
        <dbReference type="ChEBI" id="CHEBI:17154"/>
        <dbReference type="ChEBI" id="CHEBI:29919"/>
        <dbReference type="ChEBI" id="CHEBI:57305"/>
        <dbReference type="ChEBI" id="CHEBI:57540"/>
        <dbReference type="ChEBI" id="CHEBI:139151"/>
        <dbReference type="EC" id="2.4.2.59"/>
    </reaction>
</comment>
<comment type="cofactor">
    <cofactor evidence="1">
        <name>Fe(2+)</name>
        <dbReference type="ChEBI" id="CHEBI:29033"/>
    </cofactor>
</comment>
<comment type="pathway">
    <text evidence="1">Cofactor biosynthesis; thiamine diphosphate biosynthesis.</text>
</comment>
<comment type="subunit">
    <text evidence="1">Homooctamer; tetramer of dimers.</text>
</comment>
<comment type="similarity">
    <text evidence="1">Belongs to the THI4 family.</text>
</comment>
<name>THI4_PYRAB</name>
<protein>
    <recommendedName>
        <fullName evidence="1">Thiamine thiazole synthase</fullName>
        <ecNumber evidence="1">2.4.2.59</ecNumber>
    </recommendedName>
</protein>
<gene>
    <name evidence="1" type="primary">thi4</name>
    <name type="ordered locus">PYRAB07910</name>
    <name type="ORF">PAB0536</name>
</gene>
<organism>
    <name type="scientific">Pyrococcus abyssi (strain GE5 / Orsay)</name>
    <dbReference type="NCBI Taxonomy" id="272844"/>
    <lineage>
        <taxon>Archaea</taxon>
        <taxon>Methanobacteriati</taxon>
        <taxon>Methanobacteriota</taxon>
        <taxon>Thermococci</taxon>
        <taxon>Thermococcales</taxon>
        <taxon>Thermococcaceae</taxon>
        <taxon>Pyrococcus</taxon>
    </lineage>
</organism>
<evidence type="ECO:0000255" key="1">
    <source>
        <dbReference type="HAMAP-Rule" id="MF_00304"/>
    </source>
</evidence>
<proteinExistence type="inferred from homology"/>
<feature type="chain" id="PRO_0000153951" description="Thiamine thiazole synthase">
    <location>
        <begin position="1"/>
        <end position="252"/>
    </location>
</feature>
<feature type="binding site" description="in other chain" evidence="1">
    <location>
        <position position="35"/>
    </location>
    <ligand>
        <name>NAD(+)</name>
        <dbReference type="ChEBI" id="CHEBI:57540"/>
        <note>ligand shared between two adjacent protomers</note>
    </ligand>
</feature>
<feature type="binding site" description="in other chain" evidence="1">
    <location>
        <begin position="54"/>
        <end position="55"/>
    </location>
    <ligand>
        <name>NAD(+)</name>
        <dbReference type="ChEBI" id="CHEBI:57540"/>
        <note>ligand shared between two adjacent protomers</note>
    </ligand>
</feature>
<feature type="binding site" description="in other chain" evidence="1">
    <location>
        <position position="62"/>
    </location>
    <ligand>
        <name>NAD(+)</name>
        <dbReference type="ChEBI" id="CHEBI:57540"/>
        <note>ligand shared between two adjacent protomers</note>
    </ligand>
</feature>
<feature type="binding site" description="in other chain" evidence="1">
    <location>
        <position position="126"/>
    </location>
    <ligand>
        <name>NAD(+)</name>
        <dbReference type="ChEBI" id="CHEBI:57540"/>
        <note>ligand shared between two adjacent protomers</note>
    </ligand>
</feature>
<feature type="binding site" evidence="1">
    <location>
        <begin position="152"/>
        <end position="154"/>
    </location>
    <ligand>
        <name>NAD(+)</name>
        <dbReference type="ChEBI" id="CHEBI:57540"/>
        <note>ligand shared between two adjacent protomers</note>
    </ligand>
</feature>
<feature type="binding site" evidence="1">
    <location>
        <position position="154"/>
    </location>
    <ligand>
        <name>Fe cation</name>
        <dbReference type="ChEBI" id="CHEBI:24875"/>
        <note>ligand shared between two adjacent protomers</note>
    </ligand>
</feature>
<feature type="binding site" description="in other chain" evidence="1">
    <location>
        <position position="169"/>
    </location>
    <ligand>
        <name>Fe cation</name>
        <dbReference type="ChEBI" id="CHEBI:24875"/>
        <note>ligand shared between two adjacent protomers</note>
    </ligand>
</feature>
<feature type="binding site" description="in other chain" evidence="1">
    <location>
        <position position="217"/>
    </location>
    <ligand>
        <name>NAD(+)</name>
        <dbReference type="ChEBI" id="CHEBI:57540"/>
        <note>ligand shared between two adjacent protomers</note>
    </ligand>
</feature>
<feature type="binding site" evidence="1">
    <location>
        <position position="227"/>
    </location>
    <ligand>
        <name>glycine</name>
        <dbReference type="ChEBI" id="CHEBI:57305"/>
    </ligand>
</feature>
<dbReference type="EC" id="2.4.2.59" evidence="1"/>
<dbReference type="EMBL" id="AJ248285">
    <property type="protein sequence ID" value="CAB49705.1"/>
    <property type="molecule type" value="Genomic_DNA"/>
</dbReference>
<dbReference type="EMBL" id="HE613800">
    <property type="protein sequence ID" value="CCE70190.1"/>
    <property type="molecule type" value="Genomic_DNA"/>
</dbReference>
<dbReference type="PIR" id="H75123">
    <property type="entry name" value="H75123"/>
</dbReference>
<dbReference type="RefSeq" id="WP_010867913.1">
    <property type="nucleotide sequence ID" value="NC_000868.1"/>
</dbReference>
<dbReference type="SMR" id="Q9V0J8"/>
<dbReference type="STRING" id="272844.PAB0536"/>
<dbReference type="KEGG" id="pab:PAB0536"/>
<dbReference type="PATRIC" id="fig|272844.11.peg.833"/>
<dbReference type="eggNOG" id="arCOG00574">
    <property type="taxonomic scope" value="Archaea"/>
</dbReference>
<dbReference type="HOGENOM" id="CLU_053727_2_0_2"/>
<dbReference type="OrthoDB" id="4240at2157"/>
<dbReference type="PhylomeDB" id="Q9V0J8"/>
<dbReference type="UniPathway" id="UPA00060"/>
<dbReference type="Proteomes" id="UP000000810">
    <property type="component" value="Chromosome"/>
</dbReference>
<dbReference type="Proteomes" id="UP000009139">
    <property type="component" value="Chromosome"/>
</dbReference>
<dbReference type="GO" id="GO:0005506">
    <property type="term" value="F:iron ion binding"/>
    <property type="evidence" value="ECO:0007669"/>
    <property type="project" value="UniProtKB-UniRule"/>
</dbReference>
<dbReference type="GO" id="GO:0016763">
    <property type="term" value="F:pentosyltransferase activity"/>
    <property type="evidence" value="ECO:0007669"/>
    <property type="project" value="UniProtKB-UniRule"/>
</dbReference>
<dbReference type="GO" id="GO:0009228">
    <property type="term" value="P:thiamine biosynthetic process"/>
    <property type="evidence" value="ECO:0007669"/>
    <property type="project" value="UniProtKB-KW"/>
</dbReference>
<dbReference type="GO" id="GO:0009229">
    <property type="term" value="P:thiamine diphosphate biosynthetic process"/>
    <property type="evidence" value="ECO:0007669"/>
    <property type="project" value="UniProtKB-UniRule"/>
</dbReference>
<dbReference type="GO" id="GO:0052837">
    <property type="term" value="P:thiazole biosynthetic process"/>
    <property type="evidence" value="ECO:0007669"/>
    <property type="project" value="UniProtKB-UniRule"/>
</dbReference>
<dbReference type="Gene3D" id="3.50.50.60">
    <property type="entry name" value="FAD/NAD(P)-binding domain"/>
    <property type="match status" value="1"/>
</dbReference>
<dbReference type="HAMAP" id="MF_00304">
    <property type="entry name" value="Thi4"/>
    <property type="match status" value="1"/>
</dbReference>
<dbReference type="InterPro" id="IPR036188">
    <property type="entry name" value="FAD/NAD-bd_sf"/>
</dbReference>
<dbReference type="InterPro" id="IPR002922">
    <property type="entry name" value="Thi4_fam"/>
</dbReference>
<dbReference type="InterPro" id="IPR022828">
    <property type="entry name" value="Thi4_prok"/>
</dbReference>
<dbReference type="NCBIfam" id="TIGR00292">
    <property type="entry name" value="sulfide-dependent adenosine diphosphate thiazole synthase"/>
    <property type="match status" value="1"/>
</dbReference>
<dbReference type="PANTHER" id="PTHR43422">
    <property type="entry name" value="THIAMINE THIAZOLE SYNTHASE"/>
    <property type="match status" value="1"/>
</dbReference>
<dbReference type="PANTHER" id="PTHR43422:SF3">
    <property type="entry name" value="THIAMINE THIAZOLE SYNTHASE"/>
    <property type="match status" value="1"/>
</dbReference>
<dbReference type="Pfam" id="PF01946">
    <property type="entry name" value="Thi4"/>
    <property type="match status" value="1"/>
</dbReference>
<dbReference type="PRINTS" id="PR00420">
    <property type="entry name" value="RNGMNOXGNASE"/>
</dbReference>
<dbReference type="SUPFAM" id="SSF51905">
    <property type="entry name" value="FAD/NAD(P)-binding domain"/>
    <property type="match status" value="1"/>
</dbReference>
<sequence>MLREVTISRAIIESYYRDLLNNLELDVAIVGAGPSGMVAAYYLAKGGAKVAIFEKKLSIGGGIWGGGMGFNKVVVQEEAREILDEFDIRYEEFEKGYYVADAIEVATTIASKTVKAGVKIFNMIEVEDLVVKDNRVSGIVINWTPVLMTGLHVDPLTVEAKYVIDSTGHGAQVAQFLLKRGLIERIPGEGAMWAEQGERLTVENTREVFPGLYVTGMAANAIAGAPRMGPIFGGMFLSGKKAAQEILEKLNL</sequence>
<accession>Q9V0J8</accession>
<accession>G8ZGZ5</accession>
<keyword id="KW-0408">Iron</keyword>
<keyword id="KW-0479">Metal-binding</keyword>
<keyword id="KW-0520">NAD</keyword>
<keyword id="KW-0784">Thiamine biosynthesis</keyword>
<keyword id="KW-0808">Transferase</keyword>
<reference key="1">
    <citation type="journal article" date="2003" name="Mol. Microbiol.">
        <title>An integrated analysis of the genome of the hyperthermophilic archaeon Pyrococcus abyssi.</title>
        <authorList>
            <person name="Cohen G.N."/>
            <person name="Barbe V."/>
            <person name="Flament D."/>
            <person name="Galperin M."/>
            <person name="Heilig R."/>
            <person name="Lecompte O."/>
            <person name="Poch O."/>
            <person name="Prieur D."/>
            <person name="Querellou J."/>
            <person name="Ripp R."/>
            <person name="Thierry J.-C."/>
            <person name="Van der Oost J."/>
            <person name="Weissenbach J."/>
            <person name="Zivanovic Y."/>
            <person name="Forterre P."/>
        </authorList>
    </citation>
    <scope>NUCLEOTIDE SEQUENCE [LARGE SCALE GENOMIC DNA]</scope>
    <source>
        <strain>GE5 / Orsay</strain>
    </source>
</reference>
<reference key="2">
    <citation type="journal article" date="2012" name="Curr. Microbiol.">
        <title>Re-annotation of two hyperthermophilic archaea Pyrococcus abyssi GE5 and Pyrococcus furiosus DSM 3638.</title>
        <authorList>
            <person name="Gao J."/>
            <person name="Wang J."/>
        </authorList>
    </citation>
    <scope>GENOME REANNOTATION</scope>
    <source>
        <strain>GE5 / Orsay</strain>
    </source>
</reference>